<reference key="1">
    <citation type="journal article" date="2011" name="BMC Genomics">
        <title>Complete genome sequence of the filamentous anoxygenic phototrophic bacterium Chloroflexus aurantiacus.</title>
        <authorList>
            <person name="Tang K.H."/>
            <person name="Barry K."/>
            <person name="Chertkov O."/>
            <person name="Dalin E."/>
            <person name="Han C.S."/>
            <person name="Hauser L.J."/>
            <person name="Honchak B.M."/>
            <person name="Karbach L.E."/>
            <person name="Land M.L."/>
            <person name="Lapidus A."/>
            <person name="Larimer F.W."/>
            <person name="Mikhailova N."/>
            <person name="Pitluck S."/>
            <person name="Pierson B.K."/>
            <person name="Blankenship R.E."/>
        </authorList>
    </citation>
    <scope>NUCLEOTIDE SEQUENCE [LARGE SCALE GENOMIC DNA]</scope>
    <source>
        <strain>ATCC 29366 / DSM 635 / J-10-fl</strain>
    </source>
</reference>
<gene>
    <name evidence="1" type="primary">rpsS</name>
    <name type="ordered locus">Caur_2373</name>
</gene>
<proteinExistence type="inferred from homology"/>
<dbReference type="EMBL" id="CP000909">
    <property type="protein sequence ID" value="ABY35582.1"/>
    <property type="status" value="ALT_INIT"/>
    <property type="molecule type" value="Genomic_DNA"/>
</dbReference>
<dbReference type="RefSeq" id="WP_015909214.1">
    <property type="nucleotide sequence ID" value="NC_010175.1"/>
</dbReference>
<dbReference type="RefSeq" id="YP_001635971.1">
    <property type="nucleotide sequence ID" value="NC_010175.1"/>
</dbReference>
<dbReference type="SMR" id="A9WH70"/>
<dbReference type="FunCoup" id="A9WH70">
    <property type="interactions" value="452"/>
</dbReference>
<dbReference type="STRING" id="324602.Caur_2373"/>
<dbReference type="EnsemblBacteria" id="ABY35582">
    <property type="protein sequence ID" value="ABY35582"/>
    <property type="gene ID" value="Caur_2373"/>
</dbReference>
<dbReference type="KEGG" id="cau:Caur_2373"/>
<dbReference type="PATRIC" id="fig|324602.8.peg.2687"/>
<dbReference type="eggNOG" id="COG0185">
    <property type="taxonomic scope" value="Bacteria"/>
</dbReference>
<dbReference type="HOGENOM" id="CLU_144911_0_1_0"/>
<dbReference type="InParanoid" id="A9WH70"/>
<dbReference type="Proteomes" id="UP000002008">
    <property type="component" value="Chromosome"/>
</dbReference>
<dbReference type="GO" id="GO:0005737">
    <property type="term" value="C:cytoplasm"/>
    <property type="evidence" value="ECO:0007669"/>
    <property type="project" value="UniProtKB-ARBA"/>
</dbReference>
<dbReference type="GO" id="GO:0015935">
    <property type="term" value="C:small ribosomal subunit"/>
    <property type="evidence" value="ECO:0007669"/>
    <property type="project" value="InterPro"/>
</dbReference>
<dbReference type="GO" id="GO:0019843">
    <property type="term" value="F:rRNA binding"/>
    <property type="evidence" value="ECO:0007669"/>
    <property type="project" value="UniProtKB-UniRule"/>
</dbReference>
<dbReference type="GO" id="GO:0003735">
    <property type="term" value="F:structural constituent of ribosome"/>
    <property type="evidence" value="ECO:0000318"/>
    <property type="project" value="GO_Central"/>
</dbReference>
<dbReference type="GO" id="GO:0000028">
    <property type="term" value="P:ribosomal small subunit assembly"/>
    <property type="evidence" value="ECO:0000318"/>
    <property type="project" value="GO_Central"/>
</dbReference>
<dbReference type="GO" id="GO:0006412">
    <property type="term" value="P:translation"/>
    <property type="evidence" value="ECO:0007669"/>
    <property type="project" value="UniProtKB-UniRule"/>
</dbReference>
<dbReference type="FunFam" id="3.30.860.10:FF:000001">
    <property type="entry name" value="30S ribosomal protein S19"/>
    <property type="match status" value="1"/>
</dbReference>
<dbReference type="Gene3D" id="3.30.860.10">
    <property type="entry name" value="30s Ribosomal Protein S19, Chain A"/>
    <property type="match status" value="1"/>
</dbReference>
<dbReference type="HAMAP" id="MF_00531">
    <property type="entry name" value="Ribosomal_uS19"/>
    <property type="match status" value="1"/>
</dbReference>
<dbReference type="InterPro" id="IPR002222">
    <property type="entry name" value="Ribosomal_uS19"/>
</dbReference>
<dbReference type="InterPro" id="IPR005732">
    <property type="entry name" value="Ribosomal_uS19_bac-type"/>
</dbReference>
<dbReference type="InterPro" id="IPR020934">
    <property type="entry name" value="Ribosomal_uS19_CS"/>
</dbReference>
<dbReference type="InterPro" id="IPR023575">
    <property type="entry name" value="Ribosomal_uS19_SF"/>
</dbReference>
<dbReference type="NCBIfam" id="TIGR01050">
    <property type="entry name" value="rpsS_bact"/>
    <property type="match status" value="1"/>
</dbReference>
<dbReference type="PANTHER" id="PTHR11880">
    <property type="entry name" value="RIBOSOMAL PROTEIN S19P FAMILY MEMBER"/>
    <property type="match status" value="1"/>
</dbReference>
<dbReference type="PANTHER" id="PTHR11880:SF8">
    <property type="entry name" value="SMALL RIBOSOMAL SUBUNIT PROTEIN US19M"/>
    <property type="match status" value="1"/>
</dbReference>
<dbReference type="Pfam" id="PF00203">
    <property type="entry name" value="Ribosomal_S19"/>
    <property type="match status" value="1"/>
</dbReference>
<dbReference type="PIRSF" id="PIRSF002144">
    <property type="entry name" value="Ribosomal_S19"/>
    <property type="match status" value="1"/>
</dbReference>
<dbReference type="PRINTS" id="PR00975">
    <property type="entry name" value="RIBOSOMALS19"/>
</dbReference>
<dbReference type="SUPFAM" id="SSF54570">
    <property type="entry name" value="Ribosomal protein S19"/>
    <property type="match status" value="1"/>
</dbReference>
<dbReference type="PROSITE" id="PS00323">
    <property type="entry name" value="RIBOSOMAL_S19"/>
    <property type="match status" value="1"/>
</dbReference>
<protein>
    <recommendedName>
        <fullName evidence="1">Small ribosomal subunit protein uS19</fullName>
    </recommendedName>
    <alternativeName>
        <fullName evidence="2">30S ribosomal protein S19</fullName>
    </alternativeName>
</protein>
<sequence>MSRSSKKGPYVDIKLLDKIEAMNKANEKRVIRTWSRDSTIFPQMIGHTIAVHDGRRHVPVYITENMVGHKLGEFAPTRFFRGHGGKKADKRGKVK</sequence>
<name>RS19_CHLAA</name>
<organism>
    <name type="scientific">Chloroflexus aurantiacus (strain ATCC 29366 / DSM 635 / J-10-fl)</name>
    <dbReference type="NCBI Taxonomy" id="324602"/>
    <lineage>
        <taxon>Bacteria</taxon>
        <taxon>Bacillati</taxon>
        <taxon>Chloroflexota</taxon>
        <taxon>Chloroflexia</taxon>
        <taxon>Chloroflexales</taxon>
        <taxon>Chloroflexineae</taxon>
        <taxon>Chloroflexaceae</taxon>
        <taxon>Chloroflexus</taxon>
    </lineage>
</organism>
<evidence type="ECO:0000255" key="1">
    <source>
        <dbReference type="HAMAP-Rule" id="MF_00531"/>
    </source>
</evidence>
<evidence type="ECO:0000305" key="2"/>
<keyword id="KW-1185">Reference proteome</keyword>
<keyword id="KW-0687">Ribonucleoprotein</keyword>
<keyword id="KW-0689">Ribosomal protein</keyword>
<keyword id="KW-0694">RNA-binding</keyword>
<keyword id="KW-0699">rRNA-binding</keyword>
<comment type="function">
    <text evidence="1">Protein S19 forms a complex with S13 that binds strongly to the 16S ribosomal RNA.</text>
</comment>
<comment type="similarity">
    <text evidence="1">Belongs to the universal ribosomal protein uS19 family.</text>
</comment>
<comment type="sequence caution" evidence="2">
    <conflict type="erroneous initiation">
        <sequence resource="EMBL-CDS" id="ABY35582"/>
    </conflict>
</comment>
<feature type="chain" id="PRO_0000354287" description="Small ribosomal subunit protein uS19">
    <location>
        <begin position="1"/>
        <end position="95"/>
    </location>
</feature>
<accession>A9WH70</accession>